<feature type="signal peptide" evidence="2">
    <location>
        <begin position="1"/>
        <end position="25"/>
    </location>
</feature>
<feature type="chain" id="PRO_0000379605" description="Putative defensin-like protein 23">
    <location>
        <begin position="26"/>
        <end position="80"/>
    </location>
</feature>
<feature type="disulfide bond" evidence="1">
    <location>
        <begin position="31"/>
        <end position="80"/>
    </location>
</feature>
<feature type="disulfide bond" evidence="1">
    <location>
        <begin position="41"/>
        <end position="66"/>
    </location>
</feature>
<feature type="disulfide bond" evidence="1">
    <location>
        <begin position="50"/>
        <end position="76"/>
    </location>
</feature>
<feature type="disulfide bond" evidence="1">
    <location>
        <begin position="54"/>
        <end position="78"/>
    </location>
</feature>
<organism>
    <name type="scientific">Arabidopsis thaliana</name>
    <name type="common">Mouse-ear cress</name>
    <dbReference type="NCBI Taxonomy" id="3702"/>
    <lineage>
        <taxon>Eukaryota</taxon>
        <taxon>Viridiplantae</taxon>
        <taxon>Streptophyta</taxon>
        <taxon>Embryophyta</taxon>
        <taxon>Tracheophyta</taxon>
        <taxon>Spermatophyta</taxon>
        <taxon>Magnoliopsida</taxon>
        <taxon>eudicotyledons</taxon>
        <taxon>Gunneridae</taxon>
        <taxon>Pentapetalae</taxon>
        <taxon>rosids</taxon>
        <taxon>malvids</taxon>
        <taxon>Brassicales</taxon>
        <taxon>Brassicaceae</taxon>
        <taxon>Camelineae</taxon>
        <taxon>Arabidopsis</taxon>
    </lineage>
</organism>
<proteinExistence type="inferred from homology"/>
<reference key="1">
    <citation type="journal article" date="2000" name="Nature">
        <title>Sequence and analysis of chromosome 5 of the plant Arabidopsis thaliana.</title>
        <authorList>
            <person name="Tabata S."/>
            <person name="Kaneko T."/>
            <person name="Nakamura Y."/>
            <person name="Kotani H."/>
            <person name="Kato T."/>
            <person name="Asamizu E."/>
            <person name="Miyajima N."/>
            <person name="Sasamoto S."/>
            <person name="Kimura T."/>
            <person name="Hosouchi T."/>
            <person name="Kawashima K."/>
            <person name="Kohara M."/>
            <person name="Matsumoto M."/>
            <person name="Matsuno A."/>
            <person name="Muraki A."/>
            <person name="Nakayama S."/>
            <person name="Nakazaki N."/>
            <person name="Naruo K."/>
            <person name="Okumura S."/>
            <person name="Shinpo S."/>
            <person name="Takeuchi C."/>
            <person name="Wada T."/>
            <person name="Watanabe A."/>
            <person name="Yamada M."/>
            <person name="Yasuda M."/>
            <person name="Sato S."/>
            <person name="de la Bastide M."/>
            <person name="Huang E."/>
            <person name="Spiegel L."/>
            <person name="Gnoj L."/>
            <person name="O'Shaughnessy A."/>
            <person name="Preston R."/>
            <person name="Habermann K."/>
            <person name="Murray J."/>
            <person name="Johnson D."/>
            <person name="Rohlfing T."/>
            <person name="Nelson J."/>
            <person name="Stoneking T."/>
            <person name="Pepin K."/>
            <person name="Spieth J."/>
            <person name="Sekhon M."/>
            <person name="Armstrong J."/>
            <person name="Becker M."/>
            <person name="Belter E."/>
            <person name="Cordum H."/>
            <person name="Cordes M."/>
            <person name="Courtney L."/>
            <person name="Courtney W."/>
            <person name="Dante M."/>
            <person name="Du H."/>
            <person name="Edwards J."/>
            <person name="Fryman J."/>
            <person name="Haakensen B."/>
            <person name="Lamar E."/>
            <person name="Latreille P."/>
            <person name="Leonard S."/>
            <person name="Meyer R."/>
            <person name="Mulvaney E."/>
            <person name="Ozersky P."/>
            <person name="Riley A."/>
            <person name="Strowmatt C."/>
            <person name="Wagner-McPherson C."/>
            <person name="Wollam A."/>
            <person name="Yoakum M."/>
            <person name="Bell M."/>
            <person name="Dedhia N."/>
            <person name="Parnell L."/>
            <person name="Shah R."/>
            <person name="Rodriguez M."/>
            <person name="Hoon See L."/>
            <person name="Vil D."/>
            <person name="Baker J."/>
            <person name="Kirchoff K."/>
            <person name="Toth K."/>
            <person name="King L."/>
            <person name="Bahret A."/>
            <person name="Miller B."/>
            <person name="Marra M.A."/>
            <person name="Martienssen R."/>
            <person name="McCombie W.R."/>
            <person name="Wilson R.K."/>
            <person name="Murphy G."/>
            <person name="Bancroft I."/>
            <person name="Volckaert G."/>
            <person name="Wambutt R."/>
            <person name="Duesterhoeft A."/>
            <person name="Stiekema W."/>
            <person name="Pohl T."/>
            <person name="Entian K.-D."/>
            <person name="Terryn N."/>
            <person name="Hartley N."/>
            <person name="Bent E."/>
            <person name="Johnson S."/>
            <person name="Langham S.-A."/>
            <person name="McCullagh B."/>
            <person name="Robben J."/>
            <person name="Grymonprez B."/>
            <person name="Zimmermann W."/>
            <person name="Ramsperger U."/>
            <person name="Wedler H."/>
            <person name="Balke K."/>
            <person name="Wedler E."/>
            <person name="Peters S."/>
            <person name="van Staveren M."/>
            <person name="Dirkse W."/>
            <person name="Mooijman P."/>
            <person name="Klein Lankhorst R."/>
            <person name="Weitzenegger T."/>
            <person name="Bothe G."/>
            <person name="Rose M."/>
            <person name="Hauf J."/>
            <person name="Berneiser S."/>
            <person name="Hempel S."/>
            <person name="Feldpausch M."/>
            <person name="Lamberth S."/>
            <person name="Villarroel R."/>
            <person name="Gielen J."/>
            <person name="Ardiles W."/>
            <person name="Bents O."/>
            <person name="Lemcke K."/>
            <person name="Kolesov G."/>
            <person name="Mayer K.F.X."/>
            <person name="Rudd S."/>
            <person name="Schoof H."/>
            <person name="Schueller C."/>
            <person name="Zaccaria P."/>
            <person name="Mewes H.-W."/>
            <person name="Bevan M."/>
            <person name="Fransz P.F."/>
        </authorList>
    </citation>
    <scope>NUCLEOTIDE SEQUENCE [LARGE SCALE GENOMIC DNA]</scope>
    <source>
        <strain>cv. Columbia</strain>
    </source>
</reference>
<reference key="2">
    <citation type="journal article" date="2017" name="Plant J.">
        <title>Araport11: a complete reannotation of the Arabidopsis thaliana reference genome.</title>
        <authorList>
            <person name="Cheng C.Y."/>
            <person name="Krishnakumar V."/>
            <person name="Chan A.P."/>
            <person name="Thibaud-Nissen F."/>
            <person name="Schobel S."/>
            <person name="Town C.D."/>
        </authorList>
    </citation>
    <scope>GENOME REANNOTATION</scope>
    <source>
        <strain>cv. Columbia</strain>
    </source>
</reference>
<reference key="3">
    <citation type="journal article" date="2005" name="Plant Physiol.">
        <title>Genome organization of more than 300 defensin-like genes in Arabidopsis.</title>
        <authorList>
            <person name="Silverstein K.A.T."/>
            <person name="Graham M.A."/>
            <person name="Paape T.D."/>
            <person name="VandenBosch K.A."/>
        </authorList>
    </citation>
    <scope>GENE FAMILY</scope>
</reference>
<accession>Q2V364</accession>
<name>DEF23_ARATH</name>
<dbReference type="EMBL" id="AF296837">
    <property type="status" value="NOT_ANNOTATED_CDS"/>
    <property type="molecule type" value="Genomic_DNA"/>
</dbReference>
<dbReference type="EMBL" id="CP002688">
    <property type="protein sequence ID" value="AED92684.1"/>
    <property type="molecule type" value="Genomic_DNA"/>
</dbReference>
<dbReference type="RefSeq" id="NP_001031903.1">
    <property type="nucleotide sequence ID" value="NM_001036826.2"/>
</dbReference>
<dbReference type="SMR" id="Q2V364"/>
<dbReference type="PaxDb" id="3702-AT5G19315.1"/>
<dbReference type="EnsemblPlants" id="AT5G19315.1">
    <property type="protein sequence ID" value="AT5G19315.1"/>
    <property type="gene ID" value="AT5G19315"/>
</dbReference>
<dbReference type="GeneID" id="3770682"/>
<dbReference type="Gramene" id="AT5G19315.1">
    <property type="protein sequence ID" value="AT5G19315.1"/>
    <property type="gene ID" value="AT5G19315"/>
</dbReference>
<dbReference type="KEGG" id="ath:AT5G19315"/>
<dbReference type="Araport" id="AT5G19315"/>
<dbReference type="TAIR" id="AT5G19315"/>
<dbReference type="HOGENOM" id="CLU_185732_0_0_1"/>
<dbReference type="InParanoid" id="Q2V364"/>
<dbReference type="OMA" id="KRCNKWC"/>
<dbReference type="PhylomeDB" id="Q2V364"/>
<dbReference type="PRO" id="PR:Q2V364"/>
<dbReference type="Proteomes" id="UP000006548">
    <property type="component" value="Chromosome 5"/>
</dbReference>
<dbReference type="ExpressionAtlas" id="Q2V364">
    <property type="expression patterns" value="baseline and differential"/>
</dbReference>
<dbReference type="GO" id="GO:0005576">
    <property type="term" value="C:extracellular region"/>
    <property type="evidence" value="ECO:0007669"/>
    <property type="project" value="UniProtKB-SubCell"/>
</dbReference>
<dbReference type="GO" id="GO:0050832">
    <property type="term" value="P:defense response to fungus"/>
    <property type="evidence" value="ECO:0007669"/>
    <property type="project" value="UniProtKB-KW"/>
</dbReference>
<dbReference type="GO" id="GO:0031640">
    <property type="term" value="P:killing of cells of another organism"/>
    <property type="evidence" value="ECO:0007669"/>
    <property type="project" value="UniProtKB-KW"/>
</dbReference>
<dbReference type="InterPro" id="IPR022618">
    <property type="entry name" value="Defensin-like_20-28"/>
</dbReference>
<dbReference type="PANTHER" id="PTHR34453">
    <property type="entry name" value="DEFENSIN-LIKE (DEFL) FAMILY PROTEIN-RELATED"/>
    <property type="match status" value="1"/>
</dbReference>
<dbReference type="PANTHER" id="PTHR34453:SF6">
    <property type="entry name" value="DEFENSIN-LIKE PROTEIN 23-RELATED"/>
    <property type="match status" value="1"/>
</dbReference>
<dbReference type="Pfam" id="PF10868">
    <property type="entry name" value="Defensin_like"/>
    <property type="match status" value="1"/>
</dbReference>
<gene>
    <name type="ordered locus">At5g19315</name>
    <name type="ORF">F7K24</name>
</gene>
<keyword id="KW-0929">Antimicrobial</keyword>
<keyword id="KW-1015">Disulfide bond</keyword>
<keyword id="KW-0295">Fungicide</keyword>
<keyword id="KW-0611">Plant defense</keyword>
<keyword id="KW-1185">Reference proteome</keyword>
<keyword id="KW-0964">Secreted</keyword>
<keyword id="KW-0732">Signal</keyword>
<sequence>MTTTMKIMSFAMLLVLLFSIDVVEGSGSSLCCNTHAKFGACNTYQDRKRCNKWCLDGCDNKKGGFCKRFAGGAKKCHCYC</sequence>
<comment type="subcellular location">
    <subcellularLocation>
        <location evidence="1">Secreted</location>
    </subcellularLocation>
</comment>
<comment type="similarity">
    <text evidence="3">Belongs to the DEFL family.</text>
</comment>
<evidence type="ECO:0000250" key="1"/>
<evidence type="ECO:0000255" key="2"/>
<evidence type="ECO:0000305" key="3"/>
<protein>
    <recommendedName>
        <fullName>Putative defensin-like protein 23</fullName>
    </recommendedName>
</protein>